<reference key="1">
    <citation type="submission" date="2007-05" db="EMBL/GenBank/DDBJ databases">
        <title>Complete sequence of Dehalococcoides sp. BAV1.</title>
        <authorList>
            <consortium name="US DOE Joint Genome Institute"/>
            <person name="Copeland A."/>
            <person name="Lucas S."/>
            <person name="Lapidus A."/>
            <person name="Barry K."/>
            <person name="Detter J.C."/>
            <person name="Glavina del Rio T."/>
            <person name="Hammon N."/>
            <person name="Israni S."/>
            <person name="Pitluck S."/>
            <person name="Lowry S."/>
            <person name="Clum A."/>
            <person name="Schmutz J."/>
            <person name="Larimer F."/>
            <person name="Land M."/>
            <person name="Hauser L."/>
            <person name="Kyrpides N."/>
            <person name="Kim E."/>
            <person name="Ritalahti K.M."/>
            <person name="Loeffler F."/>
            <person name="Richardson P."/>
        </authorList>
    </citation>
    <scope>NUCLEOTIDE SEQUENCE [LARGE SCALE GENOMIC DNA]</scope>
    <source>
        <strain>ATCC BAA-2100 / JCM 16839 / KCTC 5957 / BAV1</strain>
    </source>
</reference>
<organism>
    <name type="scientific">Dehalococcoides mccartyi (strain ATCC BAA-2100 / JCM 16839 / KCTC 5957 / BAV1)</name>
    <dbReference type="NCBI Taxonomy" id="216389"/>
    <lineage>
        <taxon>Bacteria</taxon>
        <taxon>Bacillati</taxon>
        <taxon>Chloroflexota</taxon>
        <taxon>Dehalococcoidia</taxon>
        <taxon>Dehalococcoidales</taxon>
        <taxon>Dehalococcoidaceae</taxon>
        <taxon>Dehalococcoides</taxon>
    </lineage>
</organism>
<accession>A5FRX4</accession>
<protein>
    <recommendedName>
        <fullName evidence="1">Small ribosomal subunit protein uS14</fullName>
    </recommendedName>
    <alternativeName>
        <fullName evidence="2">30S ribosomal protein S14 type Z</fullName>
    </alternativeName>
</protein>
<name>RS14Z_DEHMB</name>
<keyword id="KW-0479">Metal-binding</keyword>
<keyword id="KW-0687">Ribonucleoprotein</keyword>
<keyword id="KW-0689">Ribosomal protein</keyword>
<keyword id="KW-0694">RNA-binding</keyword>
<keyword id="KW-0699">rRNA-binding</keyword>
<keyword id="KW-0862">Zinc</keyword>
<proteinExistence type="inferred from homology"/>
<feature type="chain" id="PRO_1000087014" description="Small ribosomal subunit protein uS14">
    <location>
        <begin position="1"/>
        <end position="61"/>
    </location>
</feature>
<feature type="binding site" evidence="1">
    <location>
        <position position="24"/>
    </location>
    <ligand>
        <name>Zn(2+)</name>
        <dbReference type="ChEBI" id="CHEBI:29105"/>
    </ligand>
</feature>
<feature type="binding site" evidence="1">
    <location>
        <position position="27"/>
    </location>
    <ligand>
        <name>Zn(2+)</name>
        <dbReference type="ChEBI" id="CHEBI:29105"/>
    </ligand>
</feature>
<feature type="binding site" evidence="1">
    <location>
        <position position="40"/>
    </location>
    <ligand>
        <name>Zn(2+)</name>
        <dbReference type="ChEBI" id="CHEBI:29105"/>
    </ligand>
</feature>
<feature type="binding site" evidence="1">
    <location>
        <position position="43"/>
    </location>
    <ligand>
        <name>Zn(2+)</name>
        <dbReference type="ChEBI" id="CHEBI:29105"/>
    </ligand>
</feature>
<dbReference type="EMBL" id="CP000688">
    <property type="protein sequence ID" value="ABQ17049.1"/>
    <property type="molecule type" value="Genomic_DNA"/>
</dbReference>
<dbReference type="SMR" id="A5FRX4"/>
<dbReference type="KEGG" id="deb:DehaBAV1_0464"/>
<dbReference type="PATRIC" id="fig|216389.18.peg.507"/>
<dbReference type="HOGENOM" id="CLU_139869_3_0_0"/>
<dbReference type="GO" id="GO:0005737">
    <property type="term" value="C:cytoplasm"/>
    <property type="evidence" value="ECO:0007669"/>
    <property type="project" value="UniProtKB-ARBA"/>
</dbReference>
<dbReference type="GO" id="GO:0015935">
    <property type="term" value="C:small ribosomal subunit"/>
    <property type="evidence" value="ECO:0007669"/>
    <property type="project" value="TreeGrafter"/>
</dbReference>
<dbReference type="GO" id="GO:0019843">
    <property type="term" value="F:rRNA binding"/>
    <property type="evidence" value="ECO:0007669"/>
    <property type="project" value="UniProtKB-UniRule"/>
</dbReference>
<dbReference type="GO" id="GO:0003735">
    <property type="term" value="F:structural constituent of ribosome"/>
    <property type="evidence" value="ECO:0007669"/>
    <property type="project" value="InterPro"/>
</dbReference>
<dbReference type="GO" id="GO:0008270">
    <property type="term" value="F:zinc ion binding"/>
    <property type="evidence" value="ECO:0007669"/>
    <property type="project" value="UniProtKB-UniRule"/>
</dbReference>
<dbReference type="GO" id="GO:0006412">
    <property type="term" value="P:translation"/>
    <property type="evidence" value="ECO:0007669"/>
    <property type="project" value="UniProtKB-UniRule"/>
</dbReference>
<dbReference type="FunFam" id="4.10.830.10:FF:000001">
    <property type="entry name" value="30S ribosomal protein S14 type Z"/>
    <property type="match status" value="1"/>
</dbReference>
<dbReference type="Gene3D" id="4.10.830.10">
    <property type="entry name" value="30s Ribosomal Protein S14, Chain N"/>
    <property type="match status" value="1"/>
</dbReference>
<dbReference type="HAMAP" id="MF_01364_B">
    <property type="entry name" value="Ribosomal_uS14_2_B"/>
    <property type="match status" value="1"/>
</dbReference>
<dbReference type="InterPro" id="IPR001209">
    <property type="entry name" value="Ribosomal_uS14"/>
</dbReference>
<dbReference type="InterPro" id="IPR023053">
    <property type="entry name" value="Ribosomal_uS14_bact"/>
</dbReference>
<dbReference type="InterPro" id="IPR018271">
    <property type="entry name" value="Ribosomal_uS14_CS"/>
</dbReference>
<dbReference type="InterPro" id="IPR043140">
    <property type="entry name" value="Ribosomal_uS14_sf"/>
</dbReference>
<dbReference type="NCBIfam" id="NF005974">
    <property type="entry name" value="PRK08061.1"/>
    <property type="match status" value="1"/>
</dbReference>
<dbReference type="PANTHER" id="PTHR19836">
    <property type="entry name" value="30S RIBOSOMAL PROTEIN S14"/>
    <property type="match status" value="1"/>
</dbReference>
<dbReference type="PANTHER" id="PTHR19836:SF19">
    <property type="entry name" value="SMALL RIBOSOMAL SUBUNIT PROTEIN US14M"/>
    <property type="match status" value="1"/>
</dbReference>
<dbReference type="Pfam" id="PF00253">
    <property type="entry name" value="Ribosomal_S14"/>
    <property type="match status" value="1"/>
</dbReference>
<dbReference type="SUPFAM" id="SSF57716">
    <property type="entry name" value="Glucocorticoid receptor-like (DNA-binding domain)"/>
    <property type="match status" value="1"/>
</dbReference>
<dbReference type="PROSITE" id="PS00527">
    <property type="entry name" value="RIBOSOMAL_S14"/>
    <property type="match status" value="1"/>
</dbReference>
<gene>
    <name evidence="1" type="primary">rpsZ</name>
    <name evidence="1" type="synonym">rpsN</name>
    <name type="ordered locus">DehaBAV1_0464</name>
</gene>
<sequence length="61" mass="7077">MAKTSKIVQSQRASKFKVQHHNRCSRCGRPRGYINRFGLCRICFRELALQGQIPGVRKSSW</sequence>
<comment type="function">
    <text evidence="1">Binds 16S rRNA, required for the assembly of 30S particles and may also be responsible for determining the conformation of the 16S rRNA at the A site.</text>
</comment>
<comment type="cofactor">
    <cofactor evidence="1">
        <name>Zn(2+)</name>
        <dbReference type="ChEBI" id="CHEBI:29105"/>
    </cofactor>
    <text evidence="1">Binds 1 zinc ion per subunit.</text>
</comment>
<comment type="subunit">
    <text evidence="1">Part of the 30S ribosomal subunit. Contacts proteins S3 and S10.</text>
</comment>
<comment type="similarity">
    <text evidence="1">Belongs to the universal ribosomal protein uS14 family. Zinc-binding uS14 subfamily.</text>
</comment>
<evidence type="ECO:0000255" key="1">
    <source>
        <dbReference type="HAMAP-Rule" id="MF_01364"/>
    </source>
</evidence>
<evidence type="ECO:0000305" key="2"/>